<sequence>MGTNKPVVIGIAGGSGSGKTSVTKAIFDHFKGHSILILEQDYYYKDQSHLPMEERLKTNYDHPLAFDNDLLIEHLQQLLAYKQVEKPVYDYTLHTRSDEIIPVEPKDVIILEGILILEDPRLCELMDIKLFVDTDADLRILRRMQRDIKERGRTMDSVIDQYVNVVRPMHNQFIEPSKKFADIIIPEGGQNHVAIDIMVTKIATILEQKVNL</sequence>
<reference key="1">
    <citation type="journal article" date="2004" name="Nucleic Acids Res.">
        <title>The genome sequence of Bacillus cereus ATCC 10987 reveals metabolic adaptations and a large plasmid related to Bacillus anthracis pXO1.</title>
        <authorList>
            <person name="Rasko D.A."/>
            <person name="Ravel J."/>
            <person name="Oekstad O.A."/>
            <person name="Helgason E."/>
            <person name="Cer R.Z."/>
            <person name="Jiang L."/>
            <person name="Shores K.A."/>
            <person name="Fouts D.E."/>
            <person name="Tourasse N.J."/>
            <person name="Angiuoli S.V."/>
            <person name="Kolonay J.F."/>
            <person name="Nelson W.C."/>
            <person name="Kolstoe A.-B."/>
            <person name="Fraser C.M."/>
            <person name="Read T.D."/>
        </authorList>
    </citation>
    <scope>NUCLEOTIDE SEQUENCE [LARGE SCALE GENOMIC DNA]</scope>
    <source>
        <strain>ATCC 10987 / NRS 248</strain>
    </source>
</reference>
<comment type="catalytic activity">
    <reaction evidence="1">
        <text>uridine + ATP = UMP + ADP + H(+)</text>
        <dbReference type="Rhea" id="RHEA:16825"/>
        <dbReference type="ChEBI" id="CHEBI:15378"/>
        <dbReference type="ChEBI" id="CHEBI:16704"/>
        <dbReference type="ChEBI" id="CHEBI:30616"/>
        <dbReference type="ChEBI" id="CHEBI:57865"/>
        <dbReference type="ChEBI" id="CHEBI:456216"/>
        <dbReference type="EC" id="2.7.1.48"/>
    </reaction>
</comment>
<comment type="catalytic activity">
    <reaction evidence="1">
        <text>cytidine + ATP = CMP + ADP + H(+)</text>
        <dbReference type="Rhea" id="RHEA:24674"/>
        <dbReference type="ChEBI" id="CHEBI:15378"/>
        <dbReference type="ChEBI" id="CHEBI:17562"/>
        <dbReference type="ChEBI" id="CHEBI:30616"/>
        <dbReference type="ChEBI" id="CHEBI:60377"/>
        <dbReference type="ChEBI" id="CHEBI:456216"/>
        <dbReference type="EC" id="2.7.1.48"/>
    </reaction>
</comment>
<comment type="pathway">
    <text evidence="1">Pyrimidine metabolism; CTP biosynthesis via salvage pathway; CTP from cytidine: step 1/3.</text>
</comment>
<comment type="pathway">
    <text evidence="1">Pyrimidine metabolism; UMP biosynthesis via salvage pathway; UMP from uridine: step 1/1.</text>
</comment>
<comment type="subcellular location">
    <subcellularLocation>
        <location evidence="1">Cytoplasm</location>
    </subcellularLocation>
</comment>
<comment type="similarity">
    <text evidence="1">Belongs to the uridine kinase family.</text>
</comment>
<dbReference type="EC" id="2.7.1.48" evidence="1"/>
<dbReference type="EMBL" id="AE017194">
    <property type="protein sequence ID" value="AAS43363.1"/>
    <property type="molecule type" value="Genomic_DNA"/>
</dbReference>
<dbReference type="SMR" id="Q730F4"/>
<dbReference type="KEGG" id="bca:BCE_4462"/>
<dbReference type="HOGENOM" id="CLU_021278_1_2_9"/>
<dbReference type="UniPathway" id="UPA00574">
    <property type="reaction ID" value="UER00637"/>
</dbReference>
<dbReference type="UniPathway" id="UPA00579">
    <property type="reaction ID" value="UER00640"/>
</dbReference>
<dbReference type="Proteomes" id="UP000002527">
    <property type="component" value="Chromosome"/>
</dbReference>
<dbReference type="GO" id="GO:0005737">
    <property type="term" value="C:cytoplasm"/>
    <property type="evidence" value="ECO:0007669"/>
    <property type="project" value="UniProtKB-SubCell"/>
</dbReference>
<dbReference type="GO" id="GO:0005524">
    <property type="term" value="F:ATP binding"/>
    <property type="evidence" value="ECO:0007669"/>
    <property type="project" value="UniProtKB-UniRule"/>
</dbReference>
<dbReference type="GO" id="GO:0043771">
    <property type="term" value="F:cytidine kinase activity"/>
    <property type="evidence" value="ECO:0007669"/>
    <property type="project" value="RHEA"/>
</dbReference>
<dbReference type="GO" id="GO:0004849">
    <property type="term" value="F:uridine kinase activity"/>
    <property type="evidence" value="ECO:0007669"/>
    <property type="project" value="UniProtKB-UniRule"/>
</dbReference>
<dbReference type="GO" id="GO:0044211">
    <property type="term" value="P:CTP salvage"/>
    <property type="evidence" value="ECO:0007669"/>
    <property type="project" value="UniProtKB-UniRule"/>
</dbReference>
<dbReference type="GO" id="GO:0044206">
    <property type="term" value="P:UMP salvage"/>
    <property type="evidence" value="ECO:0007669"/>
    <property type="project" value="UniProtKB-UniRule"/>
</dbReference>
<dbReference type="CDD" id="cd02023">
    <property type="entry name" value="UMPK"/>
    <property type="match status" value="1"/>
</dbReference>
<dbReference type="Gene3D" id="3.40.50.300">
    <property type="entry name" value="P-loop containing nucleotide triphosphate hydrolases"/>
    <property type="match status" value="1"/>
</dbReference>
<dbReference type="HAMAP" id="MF_00551">
    <property type="entry name" value="Uridine_kinase"/>
    <property type="match status" value="1"/>
</dbReference>
<dbReference type="InterPro" id="IPR027417">
    <property type="entry name" value="P-loop_NTPase"/>
</dbReference>
<dbReference type="InterPro" id="IPR006083">
    <property type="entry name" value="PRK/URK"/>
</dbReference>
<dbReference type="InterPro" id="IPR026008">
    <property type="entry name" value="Uridine_kinase"/>
</dbReference>
<dbReference type="InterPro" id="IPR000764">
    <property type="entry name" value="Uridine_kinase-like"/>
</dbReference>
<dbReference type="NCBIfam" id="NF004018">
    <property type="entry name" value="PRK05480.1"/>
    <property type="match status" value="1"/>
</dbReference>
<dbReference type="NCBIfam" id="TIGR00235">
    <property type="entry name" value="udk"/>
    <property type="match status" value="1"/>
</dbReference>
<dbReference type="PANTHER" id="PTHR10285">
    <property type="entry name" value="URIDINE KINASE"/>
    <property type="match status" value="1"/>
</dbReference>
<dbReference type="Pfam" id="PF00485">
    <property type="entry name" value="PRK"/>
    <property type="match status" value="1"/>
</dbReference>
<dbReference type="PRINTS" id="PR00988">
    <property type="entry name" value="URIDINKINASE"/>
</dbReference>
<dbReference type="SUPFAM" id="SSF52540">
    <property type="entry name" value="P-loop containing nucleoside triphosphate hydrolases"/>
    <property type="match status" value="1"/>
</dbReference>
<name>URK_BACC1</name>
<keyword id="KW-0067">ATP-binding</keyword>
<keyword id="KW-0963">Cytoplasm</keyword>
<keyword id="KW-0418">Kinase</keyword>
<keyword id="KW-0547">Nucleotide-binding</keyword>
<keyword id="KW-0808">Transferase</keyword>
<organism>
    <name type="scientific">Bacillus cereus (strain ATCC 10987 / NRS 248)</name>
    <dbReference type="NCBI Taxonomy" id="222523"/>
    <lineage>
        <taxon>Bacteria</taxon>
        <taxon>Bacillati</taxon>
        <taxon>Bacillota</taxon>
        <taxon>Bacilli</taxon>
        <taxon>Bacillales</taxon>
        <taxon>Bacillaceae</taxon>
        <taxon>Bacillus</taxon>
        <taxon>Bacillus cereus group</taxon>
    </lineage>
</organism>
<feature type="chain" id="PRO_1000017863" description="Uridine kinase">
    <location>
        <begin position="1"/>
        <end position="212"/>
    </location>
</feature>
<feature type="binding site" evidence="1">
    <location>
        <begin position="13"/>
        <end position="20"/>
    </location>
    <ligand>
        <name>ATP</name>
        <dbReference type="ChEBI" id="CHEBI:30616"/>
    </ligand>
</feature>
<proteinExistence type="inferred from homology"/>
<accession>Q730F4</accession>
<evidence type="ECO:0000255" key="1">
    <source>
        <dbReference type="HAMAP-Rule" id="MF_00551"/>
    </source>
</evidence>
<protein>
    <recommendedName>
        <fullName evidence="1">Uridine kinase</fullName>
        <ecNumber evidence="1">2.7.1.48</ecNumber>
    </recommendedName>
    <alternativeName>
        <fullName evidence="1">Cytidine monophosphokinase</fullName>
    </alternativeName>
    <alternativeName>
        <fullName evidence="1">Uridine monophosphokinase</fullName>
    </alternativeName>
</protein>
<gene>
    <name evidence="1" type="primary">udk</name>
    <name type="ordered locus">BCE_4462</name>
</gene>